<name>RSH1L_ARATH</name>
<gene>
    <name type="primary">RSH1</name>
</gene>
<reference key="1">
    <citation type="journal article" date="2000" name="Proc. Natl. Acad. Sci. U.S.A.">
        <title>Arabidopsis RelA/SpoT homologs implicate (p)ppGpp in plant signaling.</title>
        <authorList>
            <person name="van der Biezen E.A."/>
            <person name="Sun J."/>
            <person name="Coleman M.J."/>
            <person name="Bibb M.J."/>
            <person name="Jones J.D."/>
        </authorList>
    </citation>
    <scope>NUCLEOTIDE SEQUENCE [MRNA]</scope>
    <scope>FUNCTION</scope>
    <scope>INTERACTION WITH RPP5</scope>
    <source>
        <strain>cv. Landsberg erecta</strain>
    </source>
</reference>
<protein>
    <recommendedName>
        <fullName>Putative GTP diphosphokinase RSH1, chloroplastic</fullName>
        <ecNumber>2.7.6.5</ecNumber>
    </recommendedName>
    <alternativeName>
        <fullName>RelA/SpoT homolog 1</fullName>
        <shortName>AtRSH1</shortName>
    </alternativeName>
    <alternativeName>
        <fullName>ppGpp synthetase RSH1</fullName>
    </alternativeName>
</protein>
<dbReference type="EC" id="2.7.6.5"/>
<dbReference type="EMBL" id="AF225702">
    <property type="protein sequence ID" value="AAF37281.1"/>
    <property type="molecule type" value="mRNA"/>
</dbReference>
<dbReference type="RefSeq" id="NP_567226.1">
    <property type="nucleotide sequence ID" value="NM_116459.4"/>
</dbReference>
<dbReference type="SMR" id="P0DKG8"/>
<dbReference type="BioGRID" id="13387">
    <property type="interactions" value="1"/>
</dbReference>
<dbReference type="EnsemblPlants" id="AT4G02260.2">
    <property type="protein sequence ID" value="AT4G02260.2"/>
    <property type="gene ID" value="AT4G02260"/>
</dbReference>
<dbReference type="GeneID" id="828096"/>
<dbReference type="Gramene" id="AT4G02260.2">
    <property type="protein sequence ID" value="AT4G02260.2"/>
    <property type="gene ID" value="AT4G02260"/>
</dbReference>
<dbReference type="KEGG" id="ath:AT4G02260"/>
<dbReference type="OrthoDB" id="430679at2759"/>
<dbReference type="PhylomeDB" id="P0DKG8"/>
<dbReference type="PRO" id="PR:P0DKG8"/>
<dbReference type="ExpressionAtlas" id="P0DKG8">
    <property type="expression patterns" value="baseline and differential"/>
</dbReference>
<dbReference type="GO" id="GO:0009507">
    <property type="term" value="C:chloroplast"/>
    <property type="evidence" value="ECO:0007669"/>
    <property type="project" value="UniProtKB-SubCell"/>
</dbReference>
<dbReference type="GO" id="GO:0005524">
    <property type="term" value="F:ATP binding"/>
    <property type="evidence" value="ECO:0007669"/>
    <property type="project" value="UniProtKB-KW"/>
</dbReference>
<dbReference type="GO" id="GO:0005525">
    <property type="term" value="F:GTP binding"/>
    <property type="evidence" value="ECO:0007669"/>
    <property type="project" value="UniProtKB-KW"/>
</dbReference>
<dbReference type="GO" id="GO:0008728">
    <property type="term" value="F:GTP diphosphokinase activity"/>
    <property type="evidence" value="ECO:0007669"/>
    <property type="project" value="UniProtKB-EC"/>
</dbReference>
<dbReference type="GO" id="GO:0016301">
    <property type="term" value="F:kinase activity"/>
    <property type="evidence" value="ECO:0007669"/>
    <property type="project" value="UniProtKB-KW"/>
</dbReference>
<dbReference type="GO" id="GO:0015969">
    <property type="term" value="P:guanosine tetraphosphate metabolic process"/>
    <property type="evidence" value="ECO:0007669"/>
    <property type="project" value="InterPro"/>
</dbReference>
<dbReference type="CDD" id="cd00077">
    <property type="entry name" value="HDc"/>
    <property type="match status" value="1"/>
</dbReference>
<dbReference type="CDD" id="cd05399">
    <property type="entry name" value="NT_Rel-Spo_like"/>
    <property type="match status" value="1"/>
</dbReference>
<dbReference type="CDD" id="cd01668">
    <property type="entry name" value="TGS_RSH"/>
    <property type="match status" value="1"/>
</dbReference>
<dbReference type="FunFam" id="3.10.20.30:FF:000002">
    <property type="entry name" value="GTP pyrophosphokinase (RelA/SpoT)"/>
    <property type="match status" value="1"/>
</dbReference>
<dbReference type="FunFam" id="1.10.3210.10:FF:000031">
    <property type="entry name" value="RELA/SPOT homolog 1"/>
    <property type="match status" value="1"/>
</dbReference>
<dbReference type="FunFam" id="3.30.460.10:FF:000049">
    <property type="entry name" value="RELA/SPOT homolog 1"/>
    <property type="match status" value="1"/>
</dbReference>
<dbReference type="Gene3D" id="3.10.20.30">
    <property type="match status" value="1"/>
</dbReference>
<dbReference type="Gene3D" id="3.30.460.10">
    <property type="entry name" value="Beta Polymerase, domain 2"/>
    <property type="match status" value="1"/>
</dbReference>
<dbReference type="Gene3D" id="1.10.3210.10">
    <property type="entry name" value="Hypothetical protein af1432"/>
    <property type="match status" value="1"/>
</dbReference>
<dbReference type="InterPro" id="IPR045865">
    <property type="entry name" value="ACT-like_dom_sf"/>
</dbReference>
<dbReference type="InterPro" id="IPR012675">
    <property type="entry name" value="Beta-grasp_dom_sf"/>
</dbReference>
<dbReference type="InterPro" id="IPR003607">
    <property type="entry name" value="HD/PDEase_dom"/>
</dbReference>
<dbReference type="InterPro" id="IPR006674">
    <property type="entry name" value="HD_domain"/>
</dbReference>
<dbReference type="InterPro" id="IPR043519">
    <property type="entry name" value="NT_sf"/>
</dbReference>
<dbReference type="InterPro" id="IPR007685">
    <property type="entry name" value="RelA_SpoT"/>
</dbReference>
<dbReference type="InterPro" id="IPR004095">
    <property type="entry name" value="TGS"/>
</dbReference>
<dbReference type="InterPro" id="IPR012676">
    <property type="entry name" value="TGS-like"/>
</dbReference>
<dbReference type="InterPro" id="IPR033655">
    <property type="entry name" value="TGS_RelA/SpoT"/>
</dbReference>
<dbReference type="PANTHER" id="PTHR43061">
    <property type="entry name" value="GTP DIPHOSPHOKINASE RSH1, CHLOROPLASTIC-RELATED"/>
    <property type="match status" value="1"/>
</dbReference>
<dbReference type="PANTHER" id="PTHR43061:SF1">
    <property type="entry name" value="GTP DIPHOSPHOKINASE RSH1, CHLOROPLASTIC-RELATED"/>
    <property type="match status" value="1"/>
</dbReference>
<dbReference type="Pfam" id="PF13328">
    <property type="entry name" value="HD_4"/>
    <property type="match status" value="1"/>
</dbReference>
<dbReference type="Pfam" id="PF04607">
    <property type="entry name" value="RelA_SpoT"/>
    <property type="match status" value="1"/>
</dbReference>
<dbReference type="Pfam" id="PF02824">
    <property type="entry name" value="TGS"/>
    <property type="match status" value="1"/>
</dbReference>
<dbReference type="SMART" id="SM00471">
    <property type="entry name" value="HDc"/>
    <property type="match status" value="1"/>
</dbReference>
<dbReference type="SMART" id="SM00954">
    <property type="entry name" value="RelA_SpoT"/>
    <property type="match status" value="1"/>
</dbReference>
<dbReference type="SUPFAM" id="SSF55021">
    <property type="entry name" value="ACT-like"/>
    <property type="match status" value="1"/>
</dbReference>
<dbReference type="SUPFAM" id="SSF109604">
    <property type="entry name" value="HD-domain/PDEase-like"/>
    <property type="match status" value="1"/>
</dbReference>
<dbReference type="SUPFAM" id="SSF81301">
    <property type="entry name" value="Nucleotidyltransferase"/>
    <property type="match status" value="1"/>
</dbReference>
<dbReference type="SUPFAM" id="SSF81271">
    <property type="entry name" value="TGS-like"/>
    <property type="match status" value="1"/>
</dbReference>
<dbReference type="PROSITE" id="PS51831">
    <property type="entry name" value="HD"/>
    <property type="match status" value="1"/>
</dbReference>
<dbReference type="PROSITE" id="PS51880">
    <property type="entry name" value="TGS"/>
    <property type="match status" value="1"/>
</dbReference>
<sequence>MTSASSMSVSVECVNICNLTKGDGNARSDCSALSCAWKAPRALTGFLASTAHPPVCSVYSCGRNGRKSRMKACAWQRYEYEVGFSEAPYFVNVRNILKSRLSCGGHKRWELYCVSAESSSGASSDVTVETLWEDLFPSISYLPRKELEFVQKGLKLAFEAHHGQKRRSGEPFIIHPVAVARILGELELDWESIVAGLLHDTVEDTNFITFEKIEEEFGATVRHIVEGETKVSKLGKLKCKTESETIQDVKADDLRQMFLAMTDEVRVIIVKLADRLHNMRTLCHMPPHKQSSIAGETLQVFAPLAKLLGMYSIKSELENLSFMYVSAEDYDRVTSRIANLYKEHEKELTEANRILVKKIEDDQFLDLVTVNTDVRSVCKETYSIYKAALKSKGSINDYNQIAQLRIVVKPKPSVGVGPLCSPQQICYHVLGLVHEIWKPIPRTVKDYIATPKPNGYQSLHTTVIPFLYESMFRLEVQIRTEEMDLIAERGIAVYYNGKSLSTGLVGNAVPLGRNSRGKTGCLNNADFALRVGWLNAIREWQEEFVGNMSSREFVDTITRDLLGSRVFVFTPKGEIKNLPKGATVVDYAYLIHTEIGNKMVAAKVNGNLVSPTHVLENAEVVEIVTYNALSSKSAFQRHKQWLQHAKTRSARHKIMRFLREQAAQCAAEITQDQVNDFVADSDSDVEDLTEDSRKSLQWWEKILVNVKQFQSQDKSRDTTPAPQNGSVWAPKVNGKHNKAIKNSSSDEPEFLLPGDGIARILPANIPAYKEVLPGLDSWRDSKIATWHHLEGQSIEWLCVVSMDRKGIIAEVTTVLAAEGIALCSCVAEIDRGRGLAVMLFQIEANIESLVSVCAKVDLVLGVLGWSSGCSWPRSTENAQVLEC</sequence>
<feature type="transit peptide" description="Chloroplast" evidence="1">
    <location>
        <begin position="1"/>
        <end position="55"/>
    </location>
</feature>
<feature type="chain" id="PRO_0000429845" description="Putative GTP diphosphokinase RSH1, chloroplastic">
    <location>
        <begin position="56"/>
        <end position="883"/>
    </location>
</feature>
<feature type="domain" description="HD" evidence="3">
    <location>
        <begin position="172"/>
        <end position="279"/>
    </location>
</feature>
<feature type="domain" description="TGS" evidence="4">
    <location>
        <begin position="562"/>
        <end position="625"/>
    </location>
</feature>
<feature type="domain" description="ACT" evidence="2">
    <location>
        <begin position="796"/>
        <end position="867"/>
    </location>
</feature>
<feature type="region of interest" description="Disordered" evidence="5">
    <location>
        <begin position="710"/>
        <end position="746"/>
    </location>
</feature>
<feature type="compositionally biased region" description="Polar residues" evidence="5">
    <location>
        <begin position="710"/>
        <end position="726"/>
    </location>
</feature>
<proteinExistence type="evidence at protein level"/>
<keyword id="KW-0067">ATP-binding</keyword>
<keyword id="KW-0150">Chloroplast</keyword>
<keyword id="KW-0342">GTP-binding</keyword>
<keyword id="KW-0418">Kinase</keyword>
<keyword id="KW-0547">Nucleotide-binding</keyword>
<keyword id="KW-0934">Plastid</keyword>
<keyword id="KW-0346">Stress response</keyword>
<keyword id="KW-0808">Transferase</keyword>
<keyword id="KW-0809">Transit peptide</keyword>
<evidence type="ECO:0000255" key="1"/>
<evidence type="ECO:0000255" key="2">
    <source>
        <dbReference type="PROSITE-ProRule" id="PRU01007"/>
    </source>
</evidence>
<evidence type="ECO:0000255" key="3">
    <source>
        <dbReference type="PROSITE-ProRule" id="PRU01175"/>
    </source>
</evidence>
<evidence type="ECO:0000255" key="4">
    <source>
        <dbReference type="PROSITE-ProRule" id="PRU01228"/>
    </source>
</evidence>
<evidence type="ECO:0000256" key="5">
    <source>
        <dbReference type="SAM" id="MobiDB-lite"/>
    </source>
</evidence>
<evidence type="ECO:0000269" key="6">
    <source>
    </source>
</evidence>
<evidence type="ECO:0000305" key="7"/>
<accession>P0DKG8</accession>
<accession>Q9M5P7</accession>
<organism>
    <name type="scientific">Arabidopsis thaliana</name>
    <name type="common">Mouse-ear cress</name>
    <dbReference type="NCBI Taxonomy" id="3702"/>
    <lineage>
        <taxon>Eukaryota</taxon>
        <taxon>Viridiplantae</taxon>
        <taxon>Streptophyta</taxon>
        <taxon>Embryophyta</taxon>
        <taxon>Tracheophyta</taxon>
        <taxon>Spermatophyta</taxon>
        <taxon>Magnoliopsida</taxon>
        <taxon>eudicotyledons</taxon>
        <taxon>Gunneridae</taxon>
        <taxon>Pentapetalae</taxon>
        <taxon>rosids</taxon>
        <taxon>malvids</taxon>
        <taxon>Brassicales</taxon>
        <taxon>Brassicaceae</taxon>
        <taxon>Camelineae</taxon>
        <taxon>Arabidopsis</taxon>
    </lineage>
</organism>
<comment type="function">
    <text evidence="6">May be involved in a rapid plant ppGpp (guanosine 3'-diphosphate 5'-diphosphate)-mediated response to pathogens and other stresses.</text>
</comment>
<comment type="catalytic activity">
    <reaction>
        <text>GTP + ATP = guanosine 3'-diphosphate 5'-triphosphate + AMP</text>
        <dbReference type="Rhea" id="RHEA:22088"/>
        <dbReference type="ChEBI" id="CHEBI:30616"/>
        <dbReference type="ChEBI" id="CHEBI:37565"/>
        <dbReference type="ChEBI" id="CHEBI:142410"/>
        <dbReference type="ChEBI" id="CHEBI:456215"/>
        <dbReference type="EC" id="2.7.6.5"/>
    </reaction>
</comment>
<comment type="subunit">
    <text evidence="6">Interacts with RPP5.</text>
</comment>
<comment type="subcellular location">
    <subcellularLocation>
        <location evidence="7">Plastid</location>
        <location evidence="7">Chloroplast</location>
    </subcellularLocation>
</comment>
<comment type="similarity">
    <text evidence="7">Belongs to the RelA/SpoT family.</text>
</comment>